<proteinExistence type="evidence at protein level"/>
<sequence length="397" mass="45394">MTEKARTVSDLTISQAIFELSSPFLENKSQKALDTLFSAIRDHDLAPLYKYLSENPKTSASIDFDSNFLNSMIKKNEEKLAEFDKAIEDAQELNGEHEILEAMKNKADYYTNICDRERGVQLCDETFERATLTGMKIDVLFSKIRLAYVYADMRVVGQLLEKLKPLIEKGGDWERKNRLKAYQGIYLMSIRNFSGAADLLLDCMSTFSSTELLPYYDVVRYAVISGAISLDRVDVKTKIVDSPEVLAVLPQNESMSSLEACINSLYLCDYSGFFRTLADVEVNHLKCDQFLVAHYRYYVREMRRRAYAQLLESYRALSIDSMAASFGVSVDYIDRDLASFIPDNKLNCVIDRVNGVVFTNRPDEKNRQYQEVVKQGDVLLNKLQKYQATVMRGAFKV</sequence>
<dbReference type="EMBL" id="CU329671">
    <property type="protein sequence ID" value="CAK9839474.1"/>
    <property type="molecule type" value="Genomic_DNA"/>
</dbReference>
<dbReference type="EMBL" id="D89258">
    <property type="protein sequence ID" value="BAA13919.1"/>
    <property type="molecule type" value="mRNA"/>
</dbReference>
<dbReference type="PIR" id="T37976">
    <property type="entry name" value="T37976"/>
</dbReference>
<dbReference type="PIR" id="T43183">
    <property type="entry name" value="T43183"/>
</dbReference>
<dbReference type="RefSeq" id="NP_595175.1">
    <property type="nucleotide sequence ID" value="NM_001021083.2"/>
</dbReference>
<dbReference type="SMR" id="Q10335"/>
<dbReference type="BioGRID" id="277313">
    <property type="interactions" value="13"/>
</dbReference>
<dbReference type="ComplexPortal" id="CPX-9077">
    <property type="entry name" value="26S proteasome complex"/>
</dbReference>
<dbReference type="FunCoup" id="Q10335">
    <property type="interactions" value="546"/>
</dbReference>
<dbReference type="STRING" id="284812.Q10335"/>
<dbReference type="PaxDb" id="4896-SPBC582.07c.1"/>
<dbReference type="EnsemblFungi" id="SPBC582.07c.1">
    <property type="protein sequence ID" value="SPBC582.07c.1:pep"/>
    <property type="gene ID" value="SPBC582.07c"/>
</dbReference>
<dbReference type="GeneID" id="2540794"/>
<dbReference type="KEGG" id="spo:2540794"/>
<dbReference type="PomBase" id="SPBC582.07c">
    <property type="gene designation" value="rpn7"/>
</dbReference>
<dbReference type="VEuPathDB" id="FungiDB:SPBC582.07c"/>
<dbReference type="eggNOG" id="KOG0687">
    <property type="taxonomic scope" value="Eukaryota"/>
</dbReference>
<dbReference type="HOGENOM" id="CLU_031814_1_1_1"/>
<dbReference type="InParanoid" id="Q10335"/>
<dbReference type="OMA" id="RLHCKVD"/>
<dbReference type="PhylomeDB" id="Q10335"/>
<dbReference type="Reactome" id="R-SPO-1236978">
    <property type="pathway name" value="Cross-presentation of soluble exogenous antigens (endosomes)"/>
</dbReference>
<dbReference type="Reactome" id="R-SPO-350562">
    <property type="pathway name" value="Regulation of ornithine decarboxylase (ODC)"/>
</dbReference>
<dbReference type="Reactome" id="R-SPO-5687128">
    <property type="pathway name" value="MAPK6/MAPK4 signaling"/>
</dbReference>
<dbReference type="Reactome" id="R-SPO-5689603">
    <property type="pathway name" value="UCH proteinases"/>
</dbReference>
<dbReference type="Reactome" id="R-SPO-5689880">
    <property type="pathway name" value="Ub-specific processing proteases"/>
</dbReference>
<dbReference type="Reactome" id="R-SPO-6798695">
    <property type="pathway name" value="Neutrophil degranulation"/>
</dbReference>
<dbReference type="Reactome" id="R-SPO-68949">
    <property type="pathway name" value="Orc1 removal from chromatin"/>
</dbReference>
<dbReference type="Reactome" id="R-SPO-69017">
    <property type="pathway name" value="CDK-mediated phosphorylation and removal of Cdc6"/>
</dbReference>
<dbReference type="Reactome" id="R-SPO-69601">
    <property type="pathway name" value="Ubiquitin Mediated Degradation of Phosphorylated Cdc25A"/>
</dbReference>
<dbReference type="Reactome" id="R-SPO-75815">
    <property type="pathway name" value="Ubiquitin-dependent degradation of Cyclin D"/>
</dbReference>
<dbReference type="Reactome" id="R-SPO-8854050">
    <property type="pathway name" value="FBXL7 down-regulates AURKA during mitotic entry and in early mitosis"/>
</dbReference>
<dbReference type="Reactome" id="R-SPO-8948751">
    <property type="pathway name" value="Regulation of PTEN stability and activity"/>
</dbReference>
<dbReference type="Reactome" id="R-SPO-8951664">
    <property type="pathway name" value="Neddylation"/>
</dbReference>
<dbReference type="Reactome" id="R-SPO-9755511">
    <property type="pathway name" value="KEAP1-NFE2L2 pathway"/>
</dbReference>
<dbReference type="Reactome" id="R-SPO-983168">
    <property type="pathway name" value="Antigen processing: Ubiquitination &amp; Proteasome degradation"/>
</dbReference>
<dbReference type="Reactome" id="R-SPO-9907900">
    <property type="pathway name" value="Proteasome assembly"/>
</dbReference>
<dbReference type="PRO" id="PR:Q10335"/>
<dbReference type="Proteomes" id="UP000002485">
    <property type="component" value="Chromosome II"/>
</dbReference>
<dbReference type="GO" id="GO:0005829">
    <property type="term" value="C:cytosol"/>
    <property type="evidence" value="ECO:0007005"/>
    <property type="project" value="PomBase"/>
</dbReference>
<dbReference type="GO" id="GO:0005634">
    <property type="term" value="C:nucleus"/>
    <property type="evidence" value="ECO:0007005"/>
    <property type="project" value="PomBase"/>
</dbReference>
<dbReference type="GO" id="GO:0005838">
    <property type="term" value="C:proteasome regulatory particle"/>
    <property type="evidence" value="ECO:0000318"/>
    <property type="project" value="GO_Central"/>
</dbReference>
<dbReference type="GO" id="GO:0008541">
    <property type="term" value="C:proteasome regulatory particle, lid subcomplex"/>
    <property type="evidence" value="ECO:0000314"/>
    <property type="project" value="PomBase"/>
</dbReference>
<dbReference type="GO" id="GO:0043161">
    <property type="term" value="P:proteasome-mediated ubiquitin-dependent protein catabolic process"/>
    <property type="evidence" value="ECO:0000318"/>
    <property type="project" value="GO_Central"/>
</dbReference>
<dbReference type="FunFam" id="1.25.40.570:FF:000005">
    <property type="entry name" value="26S proteasome regulatory subunit N7"/>
    <property type="match status" value="1"/>
</dbReference>
<dbReference type="Gene3D" id="1.25.40.570">
    <property type="match status" value="1"/>
</dbReference>
<dbReference type="InterPro" id="IPR000717">
    <property type="entry name" value="PCI_dom"/>
</dbReference>
<dbReference type="InterPro" id="IPR019585">
    <property type="entry name" value="Rpn7/CSN1"/>
</dbReference>
<dbReference type="InterPro" id="IPR045135">
    <property type="entry name" value="Rpn7_N"/>
</dbReference>
<dbReference type="InterPro" id="IPR049549">
    <property type="entry name" value="RPN7_PSMD6_C"/>
</dbReference>
<dbReference type="InterPro" id="IPR036390">
    <property type="entry name" value="WH_DNA-bd_sf"/>
</dbReference>
<dbReference type="PANTHER" id="PTHR14145:SF1">
    <property type="entry name" value="26S PROTEASOME NON-ATPASE REGULATORY SUBUNIT 6"/>
    <property type="match status" value="1"/>
</dbReference>
<dbReference type="PANTHER" id="PTHR14145">
    <property type="entry name" value="26S PROTESOME SUBUNIT 6"/>
    <property type="match status" value="1"/>
</dbReference>
<dbReference type="Pfam" id="PF01399">
    <property type="entry name" value="PCI"/>
    <property type="match status" value="1"/>
</dbReference>
<dbReference type="Pfam" id="PF10602">
    <property type="entry name" value="RPN7"/>
    <property type="match status" value="1"/>
</dbReference>
<dbReference type="Pfam" id="PF21154">
    <property type="entry name" value="RPN7_PSMD6_C"/>
    <property type="match status" value="1"/>
</dbReference>
<dbReference type="SMART" id="SM00088">
    <property type="entry name" value="PINT"/>
    <property type="match status" value="1"/>
</dbReference>
<dbReference type="SUPFAM" id="SSF46785">
    <property type="entry name" value="Winged helix' DNA-binding domain"/>
    <property type="match status" value="1"/>
</dbReference>
<dbReference type="PROSITE" id="PS50250">
    <property type="entry name" value="PCI"/>
    <property type="match status" value="1"/>
</dbReference>
<protein>
    <recommendedName>
        <fullName>26S proteasome regulatory subunit rpn7</fullName>
    </recommendedName>
</protein>
<evidence type="ECO:0000250" key="1">
    <source>
        <dbReference type="UniProtKB" id="Q06103"/>
    </source>
</evidence>
<evidence type="ECO:0000255" key="2">
    <source>
        <dbReference type="PROSITE-ProRule" id="PRU01185"/>
    </source>
</evidence>
<evidence type="ECO:0000269" key="3">
    <source>
    </source>
</evidence>
<evidence type="ECO:0000269" key="4">
    <source>
    </source>
</evidence>
<evidence type="ECO:0000305" key="5"/>
<evidence type="ECO:0000312" key="6">
    <source>
        <dbReference type="PomBase" id="SPBC582.07c"/>
    </source>
</evidence>
<reference key="1">
    <citation type="journal article" date="2002" name="Nature">
        <title>The genome sequence of Schizosaccharomyces pombe.</title>
        <authorList>
            <person name="Wood V."/>
            <person name="Gwilliam R."/>
            <person name="Rajandream M.A."/>
            <person name="Lyne M.H."/>
            <person name="Lyne R."/>
            <person name="Stewart A."/>
            <person name="Sgouros J.G."/>
            <person name="Peat N."/>
            <person name="Hayles J."/>
            <person name="Baker S.G."/>
            <person name="Basham D."/>
            <person name="Bowman S."/>
            <person name="Brooks K."/>
            <person name="Brown D."/>
            <person name="Brown S."/>
            <person name="Chillingworth T."/>
            <person name="Churcher C.M."/>
            <person name="Collins M."/>
            <person name="Connor R."/>
            <person name="Cronin A."/>
            <person name="Davis P."/>
            <person name="Feltwell T."/>
            <person name="Fraser A."/>
            <person name="Gentles S."/>
            <person name="Goble A."/>
            <person name="Hamlin N."/>
            <person name="Harris D.E."/>
            <person name="Hidalgo J."/>
            <person name="Hodgson G."/>
            <person name="Holroyd S."/>
            <person name="Hornsby T."/>
            <person name="Howarth S."/>
            <person name="Huckle E.J."/>
            <person name="Hunt S."/>
            <person name="Jagels K."/>
            <person name="James K.D."/>
            <person name="Jones L."/>
            <person name="Jones M."/>
            <person name="Leather S."/>
            <person name="McDonald S."/>
            <person name="McLean J."/>
            <person name="Mooney P."/>
            <person name="Moule S."/>
            <person name="Mungall K.L."/>
            <person name="Murphy L.D."/>
            <person name="Niblett D."/>
            <person name="Odell C."/>
            <person name="Oliver K."/>
            <person name="O'Neil S."/>
            <person name="Pearson D."/>
            <person name="Quail M.A."/>
            <person name="Rabbinowitsch E."/>
            <person name="Rutherford K.M."/>
            <person name="Rutter S."/>
            <person name="Saunders D."/>
            <person name="Seeger K."/>
            <person name="Sharp S."/>
            <person name="Skelton J."/>
            <person name="Simmonds M.N."/>
            <person name="Squares R."/>
            <person name="Squares S."/>
            <person name="Stevens K."/>
            <person name="Taylor K."/>
            <person name="Taylor R.G."/>
            <person name="Tivey A."/>
            <person name="Walsh S.V."/>
            <person name="Warren T."/>
            <person name="Whitehead S."/>
            <person name="Woodward J.R."/>
            <person name="Volckaert G."/>
            <person name="Aert R."/>
            <person name="Robben J."/>
            <person name="Grymonprez B."/>
            <person name="Weltjens I."/>
            <person name="Vanstreels E."/>
            <person name="Rieger M."/>
            <person name="Schaefer M."/>
            <person name="Mueller-Auer S."/>
            <person name="Gabel C."/>
            <person name="Fuchs M."/>
            <person name="Duesterhoeft A."/>
            <person name="Fritzc C."/>
            <person name="Holzer E."/>
            <person name="Moestl D."/>
            <person name="Hilbert H."/>
            <person name="Borzym K."/>
            <person name="Langer I."/>
            <person name="Beck A."/>
            <person name="Lehrach H."/>
            <person name="Reinhardt R."/>
            <person name="Pohl T.M."/>
            <person name="Eger P."/>
            <person name="Zimmermann W."/>
            <person name="Wedler H."/>
            <person name="Wambutt R."/>
            <person name="Purnelle B."/>
            <person name="Goffeau A."/>
            <person name="Cadieu E."/>
            <person name="Dreano S."/>
            <person name="Gloux S."/>
            <person name="Lelaure V."/>
            <person name="Mottier S."/>
            <person name="Galibert F."/>
            <person name="Aves S.J."/>
            <person name="Xiang Z."/>
            <person name="Hunt C."/>
            <person name="Moore K."/>
            <person name="Hurst S.M."/>
            <person name="Lucas M."/>
            <person name="Rochet M."/>
            <person name="Gaillardin C."/>
            <person name="Tallada V.A."/>
            <person name="Garzon A."/>
            <person name="Thode G."/>
            <person name="Daga R.R."/>
            <person name="Cruzado L."/>
            <person name="Jimenez J."/>
            <person name="Sanchez M."/>
            <person name="del Rey F."/>
            <person name="Benito J."/>
            <person name="Dominguez A."/>
            <person name="Revuelta J.L."/>
            <person name="Moreno S."/>
            <person name="Armstrong J."/>
            <person name="Forsburg S.L."/>
            <person name="Cerutti L."/>
            <person name="Lowe T."/>
            <person name="McCombie W.R."/>
            <person name="Paulsen I."/>
            <person name="Potashkin J."/>
            <person name="Shpakovski G.V."/>
            <person name="Ussery D."/>
            <person name="Barrell B.G."/>
            <person name="Nurse P."/>
        </authorList>
    </citation>
    <scope>NUCLEOTIDE SEQUENCE [LARGE SCALE GENOMIC DNA]</scope>
    <source>
        <strain>972 / ATCC 24843</strain>
    </source>
</reference>
<reference key="2">
    <citation type="journal article" date="1997" name="DNA Res.">
        <title>Identification of open reading frames in Schizosaccharomyces pombe cDNAs.</title>
        <authorList>
            <person name="Yoshioka S."/>
            <person name="Kato K."/>
            <person name="Nakai K."/>
            <person name="Okayama H."/>
            <person name="Nojima H."/>
        </authorList>
    </citation>
    <scope>NUCLEOTIDE SEQUENCE [LARGE SCALE MRNA] OF 10-397</scope>
    <source>
        <strain>PR745</strain>
    </source>
</reference>
<reference key="3">
    <citation type="journal article" date="2006" name="Nat. Biotechnol.">
        <title>ORFeome cloning and global analysis of protein localization in the fission yeast Schizosaccharomyces pombe.</title>
        <authorList>
            <person name="Matsuyama A."/>
            <person name="Arai R."/>
            <person name="Yashiroda Y."/>
            <person name="Shirai A."/>
            <person name="Kamata A."/>
            <person name="Sekido S."/>
            <person name="Kobayashi Y."/>
            <person name="Hashimoto A."/>
            <person name="Hamamoto M."/>
            <person name="Hiraoka Y."/>
            <person name="Horinouchi S."/>
            <person name="Yoshida M."/>
        </authorList>
    </citation>
    <scope>SUBCELLULAR LOCATION [LARGE SCALE ANALYSIS]</scope>
</reference>
<reference key="4">
    <citation type="journal article" date="2010" name="Proc. Natl. Acad. Sci. U.S.A.">
        <title>Structure of the 26S proteasome from Schizosaccharomyces pombe at subnanometer resolution.</title>
        <authorList>
            <person name="Bohn S."/>
            <person name="Beck F."/>
            <person name="Sakata E."/>
            <person name="Walzthoeni T."/>
            <person name="Beck M."/>
            <person name="Aebersold R."/>
            <person name="Foerster F."/>
            <person name="Baumeister W."/>
            <person name="Nickell S."/>
        </authorList>
    </citation>
    <scope>STRUCTURE BY ELECTRON MICROSCOPY (9.1 ANGSTROMS) OF THE 26S PROTEASOME</scope>
</reference>
<accession>Q10335</accession>
<accession>A0AAN2L0J4</accession>
<accession>P78907</accession>
<name>RPN7_SCHPO</name>
<organism>
    <name type="scientific">Schizosaccharomyces pombe (strain 972 / ATCC 24843)</name>
    <name type="common">Fission yeast</name>
    <dbReference type="NCBI Taxonomy" id="284812"/>
    <lineage>
        <taxon>Eukaryota</taxon>
        <taxon>Fungi</taxon>
        <taxon>Dikarya</taxon>
        <taxon>Ascomycota</taxon>
        <taxon>Taphrinomycotina</taxon>
        <taxon>Schizosaccharomycetes</taxon>
        <taxon>Schizosaccharomycetales</taxon>
        <taxon>Schizosaccharomycetaceae</taxon>
        <taxon>Schizosaccharomyces</taxon>
    </lineage>
</organism>
<keyword id="KW-0963">Cytoplasm</keyword>
<keyword id="KW-0539">Nucleus</keyword>
<keyword id="KW-0647">Proteasome</keyword>
<keyword id="KW-1185">Reference proteome</keyword>
<gene>
    <name type="primary">rpn7</name>
    <name evidence="6" type="ORF">SPBC582.07c</name>
</gene>
<comment type="function">
    <text evidence="1">Component of the 19S cap proteasome complex which acts as a regulatory subunit of the 26S proteasome, involved in the ATP-dependent degradation of ubiquitinated proteins.</text>
</comment>
<comment type="subunit">
    <text evidence="4">The 26S proteasome is composed of a core protease, known as the 20S proteasome, capped at one or both ends by the 19S regulatory complex (RC). The RC is composed of at least 18 different subunits in two subcomplexes, the base and the lid, which form the portions proximal and distal to the 20S proteolytic core, respectively. Component of the lid subcomplex of the 19S RC.</text>
</comment>
<comment type="subcellular location">
    <subcellularLocation>
        <location evidence="3">Cytoplasm</location>
    </subcellularLocation>
    <subcellularLocation>
        <location evidence="3">Nucleus</location>
    </subcellularLocation>
</comment>
<feature type="chain" id="PRO_0000173844" description="26S proteasome regulatory subunit rpn7">
    <location>
        <begin position="1"/>
        <end position="397"/>
    </location>
</feature>
<feature type="domain" description="PCI" evidence="2">
    <location>
        <begin position="192"/>
        <end position="364"/>
    </location>
</feature>
<feature type="sequence conflict" description="In Ref. 2; BAA13919." evidence="5" ref="2">
    <original>Q</original>
    <variation>P</variation>
    <location>
        <position position="30"/>
    </location>
</feature>
<feature type="sequence conflict" description="In Ref. 2; BAA13919." evidence="5" ref="2">
    <original>L</original>
    <variation>F</variation>
    <location>
        <position position="122"/>
    </location>
</feature>